<keyword id="KW-0030">Aminoacyl-tRNA synthetase</keyword>
<keyword id="KW-0067">ATP-binding</keyword>
<keyword id="KW-0963">Cytoplasm</keyword>
<keyword id="KW-0436">Ligase</keyword>
<keyword id="KW-0460">Magnesium</keyword>
<keyword id="KW-0479">Metal-binding</keyword>
<keyword id="KW-0547">Nucleotide-binding</keyword>
<keyword id="KW-0648">Protein biosynthesis</keyword>
<keyword id="KW-1185">Reference proteome</keyword>
<reference key="1">
    <citation type="journal article" date="2005" name="Nat. Biotechnol.">
        <title>Complete genome sequence of the acetic acid bacterium Gluconobacter oxydans.</title>
        <authorList>
            <person name="Prust C."/>
            <person name="Hoffmeister M."/>
            <person name="Liesegang H."/>
            <person name="Wiezer A."/>
            <person name="Fricke W.F."/>
            <person name="Ehrenreich A."/>
            <person name="Gottschalk G."/>
            <person name="Deppenmeier U."/>
        </authorList>
    </citation>
    <scope>NUCLEOTIDE SEQUENCE [LARGE SCALE GENOMIC DNA]</scope>
    <source>
        <strain>621H</strain>
    </source>
</reference>
<organism>
    <name type="scientific">Gluconobacter oxydans (strain 621H)</name>
    <name type="common">Gluconobacter suboxydans</name>
    <dbReference type="NCBI Taxonomy" id="290633"/>
    <lineage>
        <taxon>Bacteria</taxon>
        <taxon>Pseudomonadati</taxon>
        <taxon>Pseudomonadota</taxon>
        <taxon>Alphaproteobacteria</taxon>
        <taxon>Acetobacterales</taxon>
        <taxon>Acetobacteraceae</taxon>
        <taxon>Gluconobacter</taxon>
    </lineage>
</organism>
<comment type="catalytic activity">
    <reaction evidence="1">
        <text>tRNA(Phe) + L-phenylalanine + ATP = L-phenylalanyl-tRNA(Phe) + AMP + diphosphate + H(+)</text>
        <dbReference type="Rhea" id="RHEA:19413"/>
        <dbReference type="Rhea" id="RHEA-COMP:9668"/>
        <dbReference type="Rhea" id="RHEA-COMP:9699"/>
        <dbReference type="ChEBI" id="CHEBI:15378"/>
        <dbReference type="ChEBI" id="CHEBI:30616"/>
        <dbReference type="ChEBI" id="CHEBI:33019"/>
        <dbReference type="ChEBI" id="CHEBI:58095"/>
        <dbReference type="ChEBI" id="CHEBI:78442"/>
        <dbReference type="ChEBI" id="CHEBI:78531"/>
        <dbReference type="ChEBI" id="CHEBI:456215"/>
        <dbReference type="EC" id="6.1.1.20"/>
    </reaction>
</comment>
<comment type="cofactor">
    <cofactor evidence="1">
        <name>Mg(2+)</name>
        <dbReference type="ChEBI" id="CHEBI:18420"/>
    </cofactor>
    <text evidence="1">Binds 2 magnesium ions per tetramer.</text>
</comment>
<comment type="subunit">
    <text evidence="1">Tetramer of two alpha and two beta subunits.</text>
</comment>
<comment type="subcellular location">
    <subcellularLocation>
        <location evidence="1">Cytoplasm</location>
    </subcellularLocation>
</comment>
<comment type="similarity">
    <text evidence="1">Belongs to the class-II aminoacyl-tRNA synthetase family. Phe-tRNA synthetase alpha subunit type 1 subfamily.</text>
</comment>
<protein>
    <recommendedName>
        <fullName evidence="1">Phenylalanine--tRNA ligase alpha subunit</fullName>
        <ecNumber evidence="1">6.1.1.20</ecNumber>
    </recommendedName>
    <alternativeName>
        <fullName evidence="1">Phenylalanyl-tRNA synthetase alpha subunit</fullName>
        <shortName evidence="1">PheRS</shortName>
    </alternativeName>
</protein>
<dbReference type="EC" id="6.1.1.20" evidence="1"/>
<dbReference type="EMBL" id="CP000009">
    <property type="protein sequence ID" value="AAW60045.1"/>
    <property type="molecule type" value="Genomic_DNA"/>
</dbReference>
<dbReference type="RefSeq" id="WP_011251848.1">
    <property type="nucleotide sequence ID" value="NC_006677.1"/>
</dbReference>
<dbReference type="SMR" id="Q5FUA1"/>
<dbReference type="STRING" id="290633.GOX0262"/>
<dbReference type="KEGG" id="gox:GOX0262"/>
<dbReference type="eggNOG" id="COG0016">
    <property type="taxonomic scope" value="Bacteria"/>
</dbReference>
<dbReference type="HOGENOM" id="CLU_025086_0_1_5"/>
<dbReference type="Proteomes" id="UP000006375">
    <property type="component" value="Chromosome"/>
</dbReference>
<dbReference type="GO" id="GO:0005737">
    <property type="term" value="C:cytoplasm"/>
    <property type="evidence" value="ECO:0007669"/>
    <property type="project" value="UniProtKB-SubCell"/>
</dbReference>
<dbReference type="GO" id="GO:0005524">
    <property type="term" value="F:ATP binding"/>
    <property type="evidence" value="ECO:0007669"/>
    <property type="project" value="UniProtKB-UniRule"/>
</dbReference>
<dbReference type="GO" id="GO:0000287">
    <property type="term" value="F:magnesium ion binding"/>
    <property type="evidence" value="ECO:0007669"/>
    <property type="project" value="UniProtKB-UniRule"/>
</dbReference>
<dbReference type="GO" id="GO:0004826">
    <property type="term" value="F:phenylalanine-tRNA ligase activity"/>
    <property type="evidence" value="ECO:0007669"/>
    <property type="project" value="UniProtKB-UniRule"/>
</dbReference>
<dbReference type="GO" id="GO:0000049">
    <property type="term" value="F:tRNA binding"/>
    <property type="evidence" value="ECO:0007669"/>
    <property type="project" value="InterPro"/>
</dbReference>
<dbReference type="GO" id="GO:0006432">
    <property type="term" value="P:phenylalanyl-tRNA aminoacylation"/>
    <property type="evidence" value="ECO:0007669"/>
    <property type="project" value="UniProtKB-UniRule"/>
</dbReference>
<dbReference type="CDD" id="cd00496">
    <property type="entry name" value="PheRS_alpha_core"/>
    <property type="match status" value="1"/>
</dbReference>
<dbReference type="Gene3D" id="3.30.930.10">
    <property type="entry name" value="Bira Bifunctional Protein, Domain 2"/>
    <property type="match status" value="1"/>
</dbReference>
<dbReference type="HAMAP" id="MF_00281">
    <property type="entry name" value="Phe_tRNA_synth_alpha1"/>
    <property type="match status" value="1"/>
</dbReference>
<dbReference type="InterPro" id="IPR006195">
    <property type="entry name" value="aa-tRNA-synth_II"/>
</dbReference>
<dbReference type="InterPro" id="IPR045864">
    <property type="entry name" value="aa-tRNA-synth_II/BPL/LPL"/>
</dbReference>
<dbReference type="InterPro" id="IPR004529">
    <property type="entry name" value="Phe-tRNA-synth_IIc_asu"/>
</dbReference>
<dbReference type="InterPro" id="IPR004188">
    <property type="entry name" value="Phe-tRNA_ligase_II_N"/>
</dbReference>
<dbReference type="InterPro" id="IPR022911">
    <property type="entry name" value="Phe_tRNA_ligase_alpha1_bac"/>
</dbReference>
<dbReference type="InterPro" id="IPR002319">
    <property type="entry name" value="Phenylalanyl-tRNA_Synthase"/>
</dbReference>
<dbReference type="InterPro" id="IPR010978">
    <property type="entry name" value="tRNA-bd_arm"/>
</dbReference>
<dbReference type="NCBIfam" id="TIGR00468">
    <property type="entry name" value="pheS"/>
    <property type="match status" value="1"/>
</dbReference>
<dbReference type="PANTHER" id="PTHR11538:SF41">
    <property type="entry name" value="PHENYLALANINE--TRNA LIGASE, MITOCHONDRIAL"/>
    <property type="match status" value="1"/>
</dbReference>
<dbReference type="PANTHER" id="PTHR11538">
    <property type="entry name" value="PHENYLALANYL-TRNA SYNTHETASE"/>
    <property type="match status" value="1"/>
</dbReference>
<dbReference type="Pfam" id="PF02912">
    <property type="entry name" value="Phe_tRNA-synt_N"/>
    <property type="match status" value="1"/>
</dbReference>
<dbReference type="Pfam" id="PF01409">
    <property type="entry name" value="tRNA-synt_2d"/>
    <property type="match status" value="1"/>
</dbReference>
<dbReference type="SUPFAM" id="SSF55681">
    <property type="entry name" value="Class II aaRS and biotin synthetases"/>
    <property type="match status" value="1"/>
</dbReference>
<dbReference type="SUPFAM" id="SSF46589">
    <property type="entry name" value="tRNA-binding arm"/>
    <property type="match status" value="1"/>
</dbReference>
<dbReference type="PROSITE" id="PS50862">
    <property type="entry name" value="AA_TRNA_LIGASE_II"/>
    <property type="match status" value="1"/>
</dbReference>
<name>SYFA_GLUOX</name>
<feature type="chain" id="PRO_0000231985" description="Phenylalanine--tRNA ligase alpha subunit">
    <location>
        <begin position="1"/>
        <end position="356"/>
    </location>
</feature>
<feature type="binding site" evidence="1">
    <location>
        <position position="260"/>
    </location>
    <ligand>
        <name>Mg(2+)</name>
        <dbReference type="ChEBI" id="CHEBI:18420"/>
        <note>shared with beta subunit</note>
    </ligand>
</feature>
<gene>
    <name evidence="1" type="primary">pheS</name>
    <name type="ordered locus">GOX0262</name>
</gene>
<proteinExistence type="inferred from homology"/>
<accession>Q5FUA1</accession>
<sequence length="356" mass="39552">MADDLDILRNDTLAALAGAQDRAQWDAIRVGTLGKSGALTGLLKQLGRLEPQERKERGQALNRLRDELTAAIEARGRDIEEEALQARLRSERVDVTMPAPAVVTGTIHPISRTIEEMTAIFGAMGFSVAEGPDIESQWHNFSALNTPEHHPARTEHDTFYLPPKNEDGEPRVLRTQTSGVQIRTMLGSKPPIRIIAPGRTYRADHDATHSPMFHQCEGLVVDRNITLGHLKGCLIEFLRVYFDKPNLPVRFRASYFPFTEPSMEVDIGWSKATGEIGGGSDWLEVLGSGMIHPRVLANCGLDPAEWQGFAFGMGIERLAMLKNGIPDLRSFYESDLRWLRHYGFSAFLPATLTEGV</sequence>
<evidence type="ECO:0000255" key="1">
    <source>
        <dbReference type="HAMAP-Rule" id="MF_00281"/>
    </source>
</evidence>